<organism>
    <name type="scientific">Staphylococcus aureus (strain USA300 / TCH1516)</name>
    <dbReference type="NCBI Taxonomy" id="451516"/>
    <lineage>
        <taxon>Bacteria</taxon>
        <taxon>Bacillati</taxon>
        <taxon>Bacillota</taxon>
        <taxon>Bacilli</taxon>
        <taxon>Bacillales</taxon>
        <taxon>Staphylococcaceae</taxon>
        <taxon>Staphylococcus</taxon>
    </lineage>
</organism>
<feature type="chain" id="PRO_1000087792" description="Tagatose-6-phosphate kinase">
    <location>
        <begin position="1"/>
        <end position="310"/>
    </location>
</feature>
<accession>A8YYG0</accession>
<protein>
    <recommendedName>
        <fullName evidence="1">Tagatose-6-phosphate kinase</fullName>
        <ecNumber evidence="1">2.7.1.144</ecNumber>
    </recommendedName>
    <alternativeName>
        <fullName evidence="1">Phosphotagatokinase</fullName>
    </alternativeName>
</protein>
<evidence type="ECO:0000255" key="1">
    <source>
        <dbReference type="HAMAP-Rule" id="MF_01557"/>
    </source>
</evidence>
<sequence length="310" mass="33853">MILTLTLNPSVDISYPLTALKLDDVNRVQEVSKTAGGKGLNVTRVLAQVGEPVLASGFIGGELGQFIAKKLDHADIKHAFYNIKGETRNCIAILHEGQQTEILEQGPEIDNQEAAGFIKHFEQLLEKVEAVAISGSLPKGLNQDYYAQIIERCQNKGVPVILDCSGATLQTVLENPYKPTVIKPNISELYQLLNQPLDESLESLKQAVSQPLFEGIEWIIVSLGAQGAFAKHNHTFYRVNIPTISVLNPVGSGDSTVAGITSAILNHENDHDLLKKANTLGMLNAQEAQTGYVNLNNYDDLFNQIEVLEV</sequence>
<reference key="1">
    <citation type="journal article" date="2007" name="BMC Microbiol.">
        <title>Subtle genetic changes enhance virulence of methicillin resistant and sensitive Staphylococcus aureus.</title>
        <authorList>
            <person name="Highlander S.K."/>
            <person name="Hulten K.G."/>
            <person name="Qin X."/>
            <person name="Jiang H."/>
            <person name="Yerrapragada S."/>
            <person name="Mason E.O. Jr."/>
            <person name="Shang Y."/>
            <person name="Williams T.M."/>
            <person name="Fortunov R.M."/>
            <person name="Liu Y."/>
            <person name="Igboeli O."/>
            <person name="Petrosino J."/>
            <person name="Tirumalai M."/>
            <person name="Uzman A."/>
            <person name="Fox G.E."/>
            <person name="Cardenas A.M."/>
            <person name="Muzny D.M."/>
            <person name="Hemphill L."/>
            <person name="Ding Y."/>
            <person name="Dugan S."/>
            <person name="Blyth P.R."/>
            <person name="Buhay C.J."/>
            <person name="Dinh H.H."/>
            <person name="Hawes A.C."/>
            <person name="Holder M."/>
            <person name="Kovar C.L."/>
            <person name="Lee S.L."/>
            <person name="Liu W."/>
            <person name="Nazareth L.V."/>
            <person name="Wang Q."/>
            <person name="Zhou J."/>
            <person name="Kaplan S.L."/>
            <person name="Weinstock G.M."/>
        </authorList>
    </citation>
    <scope>NUCLEOTIDE SEQUENCE [LARGE SCALE GENOMIC DNA]</scope>
    <source>
        <strain>USA300 / TCH1516</strain>
    </source>
</reference>
<name>LACC_STAAT</name>
<comment type="catalytic activity">
    <reaction evidence="1">
        <text>D-tagatofuranose 6-phosphate + ATP = D-tagatofuranose 1,6-bisphosphate + ADP + H(+)</text>
        <dbReference type="Rhea" id="RHEA:12420"/>
        <dbReference type="ChEBI" id="CHEBI:15378"/>
        <dbReference type="ChEBI" id="CHEBI:30616"/>
        <dbReference type="ChEBI" id="CHEBI:58694"/>
        <dbReference type="ChEBI" id="CHEBI:58695"/>
        <dbReference type="ChEBI" id="CHEBI:456216"/>
        <dbReference type="EC" id="2.7.1.144"/>
    </reaction>
</comment>
<comment type="pathway">
    <text evidence="1">Carbohydrate metabolism; D-tagatose 6-phosphate degradation; D-glyceraldehyde 3-phosphate and glycerone phosphate from D-tagatose 6-phosphate: step 1/2.</text>
</comment>
<comment type="similarity">
    <text evidence="1">Belongs to the carbohydrate kinase PfkB family. LacC subfamily.</text>
</comment>
<dbReference type="EC" id="2.7.1.144" evidence="1"/>
<dbReference type="EMBL" id="CP000730">
    <property type="protein sequence ID" value="ABX30180.1"/>
    <property type="molecule type" value="Genomic_DNA"/>
</dbReference>
<dbReference type="RefSeq" id="WP_000604135.1">
    <property type="nucleotide sequence ID" value="NC_010079.1"/>
</dbReference>
<dbReference type="SMR" id="A8YYG0"/>
<dbReference type="KEGG" id="sax:USA300HOU_2186"/>
<dbReference type="HOGENOM" id="CLU_050013_5_0_9"/>
<dbReference type="UniPathway" id="UPA00704">
    <property type="reaction ID" value="UER00715"/>
</dbReference>
<dbReference type="GO" id="GO:0005829">
    <property type="term" value="C:cytosol"/>
    <property type="evidence" value="ECO:0007669"/>
    <property type="project" value="TreeGrafter"/>
</dbReference>
<dbReference type="GO" id="GO:0005524">
    <property type="term" value="F:ATP binding"/>
    <property type="evidence" value="ECO:0007669"/>
    <property type="project" value="UniProtKB-KW"/>
</dbReference>
<dbReference type="GO" id="GO:0008443">
    <property type="term" value="F:phosphofructokinase activity"/>
    <property type="evidence" value="ECO:0007669"/>
    <property type="project" value="TreeGrafter"/>
</dbReference>
<dbReference type="GO" id="GO:0009024">
    <property type="term" value="F:tagatose-6-phosphate kinase activity"/>
    <property type="evidence" value="ECO:0007669"/>
    <property type="project" value="UniProtKB-UniRule"/>
</dbReference>
<dbReference type="GO" id="GO:2001059">
    <property type="term" value="P:D-tagatose 6-phosphate catabolic process"/>
    <property type="evidence" value="ECO:0007669"/>
    <property type="project" value="UniProtKB-UniRule"/>
</dbReference>
<dbReference type="GO" id="GO:0019512">
    <property type="term" value="P:lactose catabolic process via tagatose-6-phosphate"/>
    <property type="evidence" value="ECO:0007669"/>
    <property type="project" value="InterPro"/>
</dbReference>
<dbReference type="CDD" id="cd01164">
    <property type="entry name" value="FruK_PfkB_like"/>
    <property type="match status" value="1"/>
</dbReference>
<dbReference type="FunFam" id="3.40.1190.20:FF:000001">
    <property type="entry name" value="Phosphofructokinase"/>
    <property type="match status" value="1"/>
</dbReference>
<dbReference type="Gene3D" id="3.40.1190.20">
    <property type="match status" value="1"/>
</dbReference>
<dbReference type="HAMAP" id="MF_01557">
    <property type="entry name" value="LacC"/>
    <property type="match status" value="1"/>
</dbReference>
<dbReference type="InterPro" id="IPR002173">
    <property type="entry name" value="Carboh/pur_kinase_PfkB_CS"/>
</dbReference>
<dbReference type="InterPro" id="IPR005926">
    <property type="entry name" value="LacC"/>
</dbReference>
<dbReference type="InterPro" id="IPR011611">
    <property type="entry name" value="PfkB_dom"/>
</dbReference>
<dbReference type="InterPro" id="IPR029056">
    <property type="entry name" value="Ribokinase-like"/>
</dbReference>
<dbReference type="InterPro" id="IPR017583">
    <property type="entry name" value="Tagatose/fructose_Pkinase"/>
</dbReference>
<dbReference type="NCBIfam" id="TIGR03168">
    <property type="entry name" value="1-PFK"/>
    <property type="match status" value="1"/>
</dbReference>
<dbReference type="NCBIfam" id="TIGR01231">
    <property type="entry name" value="lacC"/>
    <property type="match status" value="1"/>
</dbReference>
<dbReference type="NCBIfam" id="NF010033">
    <property type="entry name" value="PRK13508.1"/>
    <property type="match status" value="1"/>
</dbReference>
<dbReference type="PANTHER" id="PTHR46566:SF5">
    <property type="entry name" value="1-PHOSPHOFRUCTOKINASE"/>
    <property type="match status" value="1"/>
</dbReference>
<dbReference type="PANTHER" id="PTHR46566">
    <property type="entry name" value="1-PHOSPHOFRUCTOKINASE-RELATED"/>
    <property type="match status" value="1"/>
</dbReference>
<dbReference type="Pfam" id="PF00294">
    <property type="entry name" value="PfkB"/>
    <property type="match status" value="1"/>
</dbReference>
<dbReference type="PIRSF" id="PIRSF000535">
    <property type="entry name" value="1PFK/6PFK/LacC"/>
    <property type="match status" value="1"/>
</dbReference>
<dbReference type="SUPFAM" id="SSF53613">
    <property type="entry name" value="Ribokinase-like"/>
    <property type="match status" value="1"/>
</dbReference>
<dbReference type="PROSITE" id="PS00583">
    <property type="entry name" value="PFKB_KINASES_1"/>
    <property type="match status" value="1"/>
</dbReference>
<dbReference type="PROSITE" id="PS00584">
    <property type="entry name" value="PFKB_KINASES_2"/>
    <property type="match status" value="1"/>
</dbReference>
<keyword id="KW-0067">ATP-binding</keyword>
<keyword id="KW-0418">Kinase</keyword>
<keyword id="KW-0423">Lactose metabolism</keyword>
<keyword id="KW-0547">Nucleotide-binding</keyword>
<keyword id="KW-0808">Transferase</keyword>
<gene>
    <name evidence="1" type="primary">lacC</name>
    <name type="ordered locus">USA300HOU_2186</name>
</gene>
<proteinExistence type="inferred from homology"/>